<sequence>MAAAASPAFLLRLPLLLLLSSWCRTGLADPHSLCYDITVIPKFRPGPRWCAVQGQVDEKTFLHYDCGSKTVTPVSPLGKKLNVTTAWKAQNPVLREVVDILTEQLLDIQLENYIPKEPLTLQARMSCEQKAEGHGSGSWQLSFDGQIFLLFDSENRMWTTVHPGARKMKEKWENDKDMTMSFHYISMGDCTGWLEDFLMGMDSTLEPSAGAPPTMSSGTAQPRATATTLILCCLLIMCLLICSRHSLTQSHGHHPQSLQPPPHPPLLHPTWLLRRVLWSDSYQIAKRPLSGGHVTRVTLPIIGDDSHSLPCPLALYTINNGAARYSEPLQVSIS</sequence>
<gene>
    <name evidence="12 16" type="primary">RAET1G</name>
    <name evidence="12" type="synonym">ULBP5</name>
</gene>
<reference evidence="13 15" key="1">
    <citation type="journal article" date="2004" name="J. Immunol.">
        <title>Two human ULBP/RAET1 molecules with transmembrane regions are ligands for NKG2D.</title>
        <authorList>
            <person name="Bacon L."/>
            <person name="Eagle R.A."/>
            <person name="Meyer M."/>
            <person name="Easom N."/>
            <person name="Young N.T."/>
            <person name="Trowsdale J."/>
        </authorList>
    </citation>
    <scope>NUCLEOTIDE SEQUENCE [MRNA] (ISOFORMS 1 AND 2)</scope>
    <scope>FUNCTION</scope>
    <scope>SUBCELLULAR LOCATION</scope>
    <scope>TISSUE SPECIFICITY</scope>
    <scope>INTERACTION WITH KLRK1 AND CMV UL16</scope>
</reference>
<reference key="2">
    <citation type="journal article" date="2008" name="Int. Immunol.">
        <title>Four novel ULBP splice variants are ligands for human NKG2D.</title>
        <authorList>
            <person name="Cao W."/>
            <person name="Xi X."/>
            <person name="Wang Z."/>
            <person name="Dong L."/>
            <person name="Hao Z."/>
            <person name="Cui L."/>
            <person name="Ma C."/>
            <person name="He W."/>
        </authorList>
    </citation>
    <scope>ALTERNATIVE SPLICING (ISOFORM 3)</scope>
    <scope>INTERACTION WITH KLRK1</scope>
</reference>
<reference key="3">
    <citation type="journal article" date="2009" name="Eur. J. Immunol.">
        <title>ULBP6/RAET1L is an additional human NKG2D ligand.</title>
        <authorList>
            <person name="Eagle R.A."/>
            <person name="Traherne J.A."/>
            <person name="Hair J.R."/>
            <person name="Jafferji I."/>
            <person name="Trowsdale J."/>
        </authorList>
    </citation>
    <scope>FUNCTION</scope>
    <scope>INTERACTION WITH KLRK1 AND CMV UL16</scope>
    <scope>TISSUE SPECIFICITY</scope>
</reference>
<reference key="4">
    <citation type="journal article" date="2009" name="Nat. Biotechnol.">
        <title>Mass-spectrometric identification and relative quantification of N-linked cell surface glycoproteins.</title>
        <authorList>
            <person name="Wollscheid B."/>
            <person name="Bausch-Fluck D."/>
            <person name="Henderson C."/>
            <person name="O'Brien R."/>
            <person name="Bibel M."/>
            <person name="Schiess R."/>
            <person name="Aebersold R."/>
            <person name="Watts J.D."/>
        </authorList>
    </citation>
    <scope>GLYCOSYLATION [LARGE SCALE ANALYSIS] AT ASN-82</scope>
    <source>
        <tissue>Leukemic T-cell</tissue>
    </source>
</reference>
<reference key="5">
    <citation type="journal article" date="2009" name="PLoS ONE">
        <title>Cellular expression, trafficking, and function of two isoforms of human ULBP5/RAET1G.</title>
        <authorList>
            <person name="Eagle R.A."/>
            <person name="Flack G."/>
            <person name="Warford A."/>
            <person name="Martinez-Borra J."/>
            <person name="Jafferji I."/>
            <person name="Traherne J.A."/>
            <person name="Ohashi M."/>
            <person name="Boyle L.H."/>
            <person name="Barrow A.D."/>
            <person name="Caillat-Zucman S."/>
            <person name="Young N.T."/>
            <person name="Trowsdale J."/>
        </authorList>
    </citation>
    <scope>SUBCELLULAR LOCATION (ISOFORMS 1 AND 2)</scope>
    <scope>TISSUE SPECIFICITY</scope>
</reference>
<reference key="6">
    <citation type="journal article" date="2010" name="J. Biol. Chem.">
        <title>Post-translational modification of the NKG2D ligand RAET1G leads to cell surface expression of a glycosylphosphatidylinositol-linked isoform.</title>
        <authorList>
            <person name="Ohashi M."/>
            <person name="Eagle R.A."/>
            <person name="Trowsdale J."/>
        </authorList>
    </citation>
    <scope>SUBCELLULAR LOCATION</scope>
    <scope>GPI-ANCHOR AT GLY-218</scope>
    <scope>PROTEOLYTIC PROCESSING</scope>
    <scope>MUTAGENESIS OF SER-217</scope>
</reference>
<dbReference type="EMBL" id="AY172579">
    <property type="protein sequence ID" value="AAO22238.1"/>
    <property type="molecule type" value="mRNA"/>
</dbReference>
<dbReference type="EMBL" id="AY172580">
    <property type="protein sequence ID" value="AAO22239.1"/>
    <property type="molecule type" value="mRNA"/>
</dbReference>
<dbReference type="CCDS" id="CCDS43514.1">
    <molecule id="Q6H3X3-1"/>
</dbReference>
<dbReference type="RefSeq" id="NP_001001788.2">
    <molecule id="Q6H3X3-1"/>
    <property type="nucleotide sequence ID" value="NM_001001788.4"/>
</dbReference>
<dbReference type="RefSeq" id="XP_047274685.1">
    <molecule id="Q6H3X3-2"/>
    <property type="nucleotide sequence ID" value="XM_047418729.1"/>
</dbReference>
<dbReference type="RefSeq" id="XP_054211323.1">
    <molecule id="Q6H3X3-2"/>
    <property type="nucleotide sequence ID" value="XM_054355348.1"/>
</dbReference>
<dbReference type="SMR" id="Q6H3X3"/>
<dbReference type="BioGRID" id="131627">
    <property type="interactions" value="1"/>
</dbReference>
<dbReference type="FunCoup" id="Q6H3X3">
    <property type="interactions" value="170"/>
</dbReference>
<dbReference type="IntAct" id="Q6H3X3">
    <property type="interactions" value="2"/>
</dbReference>
<dbReference type="STRING" id="9606.ENSP00000356329"/>
<dbReference type="GlyCosmos" id="Q6H3X3">
    <property type="glycosylation" value="1 site, No reported glycans"/>
</dbReference>
<dbReference type="GlyGen" id="Q6H3X3">
    <property type="glycosylation" value="1 site"/>
</dbReference>
<dbReference type="iPTMnet" id="Q6H3X3"/>
<dbReference type="PhosphoSitePlus" id="Q6H3X3"/>
<dbReference type="BioMuta" id="RAET1G"/>
<dbReference type="DMDM" id="56749591"/>
<dbReference type="jPOST" id="Q6H3X3"/>
<dbReference type="MassIVE" id="Q6H3X3"/>
<dbReference type="PaxDb" id="9606-ENSP00000356329"/>
<dbReference type="PeptideAtlas" id="Q6H3X3"/>
<dbReference type="ProteomicsDB" id="66338">
    <molecule id="Q6H3X3-1"/>
</dbReference>
<dbReference type="ProteomicsDB" id="66339">
    <molecule id="Q6H3X3-2"/>
</dbReference>
<dbReference type="Pumba" id="Q6H3X3"/>
<dbReference type="TopDownProteomics" id="Q6H3X3-1">
    <molecule id="Q6H3X3-1"/>
</dbReference>
<dbReference type="Antibodypedia" id="33303">
    <property type="antibodies" value="23 antibodies from 9 providers"/>
</dbReference>
<dbReference type="DNASU" id="353091"/>
<dbReference type="Ensembl" id="ENST00000367360.7">
    <molecule id="Q6H3X3-1"/>
    <property type="protein sequence ID" value="ENSP00000356329.2"/>
    <property type="gene ID" value="ENSG00000203722.8"/>
</dbReference>
<dbReference type="Ensembl" id="ENST00000367361.6">
    <molecule id="Q6H3X3-2"/>
    <property type="protein sequence ID" value="ENSP00000356330.2"/>
    <property type="gene ID" value="ENSG00000203722.8"/>
</dbReference>
<dbReference type="GeneID" id="353091"/>
<dbReference type="KEGG" id="hsa:353091"/>
<dbReference type="MANE-Select" id="ENST00000367360.7">
    <property type="protein sequence ID" value="ENSP00000356329.2"/>
    <property type="RefSeq nucleotide sequence ID" value="NM_001001788.4"/>
    <property type="RefSeq protein sequence ID" value="NP_001001788.2"/>
</dbReference>
<dbReference type="UCSC" id="uc010kii.1">
    <molecule id="Q6H3X3-1"/>
    <property type="organism name" value="human"/>
</dbReference>
<dbReference type="AGR" id="HGNC:16795"/>
<dbReference type="CTD" id="353091"/>
<dbReference type="DisGeNET" id="353091"/>
<dbReference type="GeneCards" id="RAET1G"/>
<dbReference type="HGNC" id="HGNC:16795">
    <property type="gene designation" value="RAET1G"/>
</dbReference>
<dbReference type="HPA" id="ENSG00000203722">
    <property type="expression patterns" value="Tissue enhanced (adrenal gland, esophagus)"/>
</dbReference>
<dbReference type="MIM" id="609244">
    <property type="type" value="gene"/>
</dbReference>
<dbReference type="neXtProt" id="NX_Q6H3X3"/>
<dbReference type="OpenTargets" id="ENSG00000203722"/>
<dbReference type="PharmGKB" id="PA134897742"/>
<dbReference type="VEuPathDB" id="HostDB:ENSG00000203722"/>
<dbReference type="eggNOG" id="ENOG502TM6M">
    <property type="taxonomic scope" value="Eukaryota"/>
</dbReference>
<dbReference type="GeneTree" id="ENSGT01130000278293"/>
<dbReference type="HOGENOM" id="CLU_086235_0_0_1"/>
<dbReference type="InParanoid" id="Q6H3X3"/>
<dbReference type="OMA" id="MCPRHSP"/>
<dbReference type="OrthoDB" id="9533462at2759"/>
<dbReference type="PAN-GO" id="Q6H3X3">
    <property type="GO annotations" value="3 GO annotations based on evolutionary models"/>
</dbReference>
<dbReference type="PhylomeDB" id="Q6H3X3"/>
<dbReference type="TreeFam" id="TF341724"/>
<dbReference type="PathwayCommons" id="Q6H3X3"/>
<dbReference type="Reactome" id="R-HSA-163125">
    <property type="pathway name" value="Post-translational modification: synthesis of GPI-anchored proteins"/>
</dbReference>
<dbReference type="SignaLink" id="Q6H3X3"/>
<dbReference type="BioGRID-ORCS" id="353091">
    <property type="hits" value="13 hits in 1105 CRISPR screens"/>
</dbReference>
<dbReference type="GenomeRNAi" id="353091"/>
<dbReference type="Pharos" id="Q6H3X3">
    <property type="development level" value="Tbio"/>
</dbReference>
<dbReference type="PRO" id="PR:Q6H3X3"/>
<dbReference type="Proteomes" id="UP000005640">
    <property type="component" value="Chromosome 6"/>
</dbReference>
<dbReference type="RNAct" id="Q6H3X3">
    <property type="molecule type" value="protein"/>
</dbReference>
<dbReference type="Bgee" id="ENSG00000203722">
    <property type="expression patterns" value="Expressed in esophagus mucosa and 90 other cell types or tissues"/>
</dbReference>
<dbReference type="ExpressionAtlas" id="Q6H3X3">
    <property type="expression patterns" value="baseline and differential"/>
</dbReference>
<dbReference type="GO" id="GO:0005783">
    <property type="term" value="C:endoplasmic reticulum"/>
    <property type="evidence" value="ECO:0007669"/>
    <property type="project" value="UniProtKB-SubCell"/>
</dbReference>
<dbReference type="GO" id="GO:0009897">
    <property type="term" value="C:external side of plasma membrane"/>
    <property type="evidence" value="ECO:0000318"/>
    <property type="project" value="GO_Central"/>
</dbReference>
<dbReference type="GO" id="GO:0005576">
    <property type="term" value="C:extracellular region"/>
    <property type="evidence" value="ECO:0000304"/>
    <property type="project" value="Reactome"/>
</dbReference>
<dbReference type="GO" id="GO:0005615">
    <property type="term" value="C:extracellular space"/>
    <property type="evidence" value="ECO:0000318"/>
    <property type="project" value="GO_Central"/>
</dbReference>
<dbReference type="GO" id="GO:0043231">
    <property type="term" value="C:intracellular membrane-bounded organelle"/>
    <property type="evidence" value="ECO:0000314"/>
    <property type="project" value="HPA"/>
</dbReference>
<dbReference type="GO" id="GO:0005886">
    <property type="term" value="C:plasma membrane"/>
    <property type="evidence" value="ECO:0000314"/>
    <property type="project" value="HPA"/>
</dbReference>
<dbReference type="GO" id="GO:0046703">
    <property type="term" value="F:natural killer cell lectin-like receptor binding"/>
    <property type="evidence" value="ECO:0000353"/>
    <property type="project" value="UniProtKB"/>
</dbReference>
<dbReference type="GO" id="GO:0002486">
    <property type="term" value="P:antigen processing and presentation of endogenous peptide antigen via MHC class I via ER pathway, TAP-independent"/>
    <property type="evidence" value="ECO:0000318"/>
    <property type="project" value="GO_Central"/>
</dbReference>
<dbReference type="GO" id="GO:0002476">
    <property type="term" value="P:antigen processing and presentation of endogenous peptide antigen via MHC class Ib"/>
    <property type="evidence" value="ECO:0000318"/>
    <property type="project" value="GO_Central"/>
</dbReference>
<dbReference type="GO" id="GO:0006955">
    <property type="term" value="P:immune response"/>
    <property type="evidence" value="ECO:0000318"/>
    <property type="project" value="GO_Central"/>
</dbReference>
<dbReference type="GO" id="GO:0042267">
    <property type="term" value="P:natural killer cell mediated cytotoxicity"/>
    <property type="evidence" value="ECO:0000314"/>
    <property type="project" value="UniProtKB"/>
</dbReference>
<dbReference type="GO" id="GO:0002729">
    <property type="term" value="P:positive regulation of natural killer cell cytokine production"/>
    <property type="evidence" value="ECO:0000314"/>
    <property type="project" value="UniProtKB"/>
</dbReference>
<dbReference type="GO" id="GO:0001916">
    <property type="term" value="P:positive regulation of T cell mediated cytotoxicity"/>
    <property type="evidence" value="ECO:0000318"/>
    <property type="project" value="GO_Central"/>
</dbReference>
<dbReference type="FunFam" id="3.30.500.10:FF:000004">
    <property type="entry name" value="Retinoic acid early-inducible protein 1-beta"/>
    <property type="match status" value="1"/>
</dbReference>
<dbReference type="Gene3D" id="3.30.500.10">
    <property type="entry name" value="MHC class I-like antigen recognition-like"/>
    <property type="match status" value="1"/>
</dbReference>
<dbReference type="InterPro" id="IPR050208">
    <property type="entry name" value="MHC_class-I_related"/>
</dbReference>
<dbReference type="InterPro" id="IPR011161">
    <property type="entry name" value="MHC_I-like_Ag-recog"/>
</dbReference>
<dbReference type="InterPro" id="IPR037055">
    <property type="entry name" value="MHC_I-like_Ag-recog_sf"/>
</dbReference>
<dbReference type="InterPro" id="IPR011162">
    <property type="entry name" value="MHC_I/II-like_Ag-recog"/>
</dbReference>
<dbReference type="PANTHER" id="PTHR16675">
    <property type="entry name" value="MHC CLASS I-RELATED"/>
    <property type="match status" value="1"/>
</dbReference>
<dbReference type="PANTHER" id="PTHR16675:SF232">
    <property type="entry name" value="UL-16 BINDING PROTEIN 5"/>
    <property type="match status" value="1"/>
</dbReference>
<dbReference type="Pfam" id="PF00129">
    <property type="entry name" value="MHC_I"/>
    <property type="match status" value="1"/>
</dbReference>
<dbReference type="SUPFAM" id="SSF54452">
    <property type="entry name" value="MHC antigen-recognition domain"/>
    <property type="match status" value="1"/>
</dbReference>
<evidence type="ECO:0000250" key="1">
    <source>
        <dbReference type="UniProtKB" id="Q9BZM4"/>
    </source>
</evidence>
<evidence type="ECO:0000250" key="2">
    <source>
        <dbReference type="UniProtKB" id="Q9BZM5"/>
    </source>
</evidence>
<evidence type="ECO:0000255" key="3"/>
<evidence type="ECO:0000269" key="4">
    <source>
    </source>
</evidence>
<evidence type="ECO:0000269" key="5">
    <source>
    </source>
</evidence>
<evidence type="ECO:0000269" key="6">
    <source>
    </source>
</evidence>
<evidence type="ECO:0000269" key="7">
    <source>
    </source>
</evidence>
<evidence type="ECO:0000269" key="8">
    <source>
    </source>
</evidence>
<evidence type="ECO:0000269" key="9">
    <source>
    </source>
</evidence>
<evidence type="ECO:0000303" key="10">
    <source>
    </source>
</evidence>
<evidence type="ECO:0000303" key="11">
    <source>
    </source>
</evidence>
<evidence type="ECO:0000303" key="12">
    <source>
    </source>
</evidence>
<evidence type="ECO:0000305" key="13"/>
<evidence type="ECO:0000305" key="14">
    <source>
    </source>
</evidence>
<evidence type="ECO:0000312" key="15">
    <source>
        <dbReference type="EMBL" id="AAO22238.1"/>
    </source>
</evidence>
<evidence type="ECO:0000312" key="16">
    <source>
        <dbReference type="HGNC" id="HGNC:16795"/>
    </source>
</evidence>
<keyword id="KW-0025">Alternative splicing</keyword>
<keyword id="KW-1003">Cell membrane</keyword>
<keyword id="KW-1015">Disulfide bond</keyword>
<keyword id="KW-0256">Endoplasmic reticulum</keyword>
<keyword id="KW-0325">Glycoprotein</keyword>
<keyword id="KW-0336">GPI-anchor</keyword>
<keyword id="KW-0945">Host-virus interaction</keyword>
<keyword id="KW-0391">Immunity</keyword>
<keyword id="KW-0449">Lipoprotein</keyword>
<keyword id="KW-0472">Membrane</keyword>
<keyword id="KW-1267">Proteomics identification</keyword>
<keyword id="KW-1185">Reference proteome</keyword>
<keyword id="KW-0964">Secreted</keyword>
<keyword id="KW-0732">Signal</keyword>
<keyword id="KW-0812">Transmembrane</keyword>
<keyword id="KW-1133">Transmembrane helix</keyword>
<proteinExistence type="evidence at protein level"/>
<feature type="signal peptide" evidence="2">
    <location>
        <begin position="1"/>
        <end position="25"/>
    </location>
</feature>
<feature type="chain" id="PRO_0000019022" description="UL-16 binding protein 5">
    <location>
        <begin position="26"/>
        <end position="218"/>
    </location>
</feature>
<feature type="propeptide" id="PRO_0000429932" description="Removed in mature form" evidence="3">
    <location>
        <begin position="219"/>
        <end position="334"/>
    </location>
</feature>
<feature type="topological domain" description="Extracellular" evidence="3">
    <location>
        <begin position="26"/>
        <end position="223"/>
    </location>
</feature>
<feature type="transmembrane region" description="Helical" evidence="3">
    <location>
        <begin position="224"/>
        <end position="243"/>
    </location>
</feature>
<feature type="topological domain" description="Cytoplasmic" evidence="3">
    <location>
        <begin position="244"/>
        <end position="334"/>
    </location>
</feature>
<feature type="region of interest" description="MHC class I alpha-1 like">
    <location>
        <begin position="29"/>
        <end position="117"/>
    </location>
</feature>
<feature type="region of interest" description="MHC class I alpha-2 like">
    <location>
        <begin position="118"/>
        <end position="210"/>
    </location>
</feature>
<feature type="lipid moiety-binding region" description="GPI-anchor amidated glycine" evidence="14">
    <location>
        <position position="218"/>
    </location>
</feature>
<feature type="glycosylation site" description="N-linked (GlcNAc...) asparagine" evidence="7">
    <location>
        <position position="82"/>
    </location>
</feature>
<feature type="disulfide bond" evidence="1">
    <location>
        <begin position="50"/>
        <end position="66"/>
    </location>
</feature>
<feature type="disulfide bond" evidence="1">
    <location>
        <begin position="127"/>
        <end position="190"/>
    </location>
</feature>
<feature type="splice variant" id="VSP_059264" description="In isoform 3." evidence="11">
    <location>
        <begin position="118"/>
        <end position="154"/>
    </location>
</feature>
<feature type="splice variant" id="VSP_051621" description="In isoform 2." evidence="10">
    <original>APP</original>
    <variation>GTV</variation>
    <location>
        <begin position="211"/>
        <end position="213"/>
    </location>
</feature>
<feature type="splice variant" id="VSP_051622" description="In isoform 2 and isoform 3." evidence="10">
    <location>
        <begin position="214"/>
        <end position="334"/>
    </location>
</feature>
<feature type="sequence variant" id="VAR_033449" description="In dbSNP:rs9397449.">
    <original>T</original>
    <variation>R</variation>
    <location>
        <position position="70"/>
    </location>
</feature>
<feature type="mutagenesis site" description="Reduced cell surface expression." evidence="9">
    <original>S</original>
    <variation>P</variation>
    <location>
        <position position="217"/>
    </location>
</feature>
<name>ULBP5_HUMAN</name>
<comment type="function">
    <molecule>Isoform 1</molecule>
    <text evidence="4 5 8">Binds and activates the KLRK1/NKG2D receptor, mediating natural killer cell cytotoxicity.</text>
</comment>
<comment type="function">
    <molecule>Isoform 3</molecule>
    <text evidence="5">Down-regulates the expression of KLRK1 and stimulates natural killer cells to secrete IFNG.</text>
</comment>
<comment type="function">
    <molecule>Isoform 2</molecule>
    <text evidence="5">Stimulates natural killer cells to secrete IFNG.</text>
</comment>
<comment type="subunit">
    <text evidence="4 5 8">Interacts with KLRK1/NKG2D.</text>
</comment>
<comment type="subunit">
    <text evidence="4 8">(Microbial infection) In CMV-infected cells, interacts with the viral glycoprotein UL16; this interaction causes RAET1G retention in the endoplasmic reticulum and cis-Golgi and prevents binding to and activation of KLRK1/NKG2D, providing CMV with an immune evasion mechanism.</text>
</comment>
<comment type="interaction">
    <interactant intactId="EBI-458334">
        <id>Q6H3X3</id>
    </interactant>
    <interactant intactId="EBI-458344">
        <id>P26718</id>
        <label>KLRK1</label>
    </interactant>
    <organismsDiffer>false</organismsDiffer>
    <experiments>6</experiments>
</comment>
<comment type="subcellular location">
    <molecule>Isoform 1</molecule>
    <subcellularLocation>
        <location evidence="4 6 9">Cell membrane</location>
        <topology evidence="9">Lipid-anchor</topology>
        <topology evidence="9">GPI-anchor</topology>
    </subcellularLocation>
    <subcellularLocation>
        <location evidence="6 9">Endoplasmic reticulum</location>
    </subcellularLocation>
    <text evidence="4 6 9">Mainly found intracellularly.</text>
</comment>
<comment type="subcellular location">
    <molecule>Isoform 2</molecule>
    <subcellularLocation>
        <location evidence="6">Secreted</location>
    </subcellularLocation>
</comment>
<comment type="alternative products">
    <event type="alternative splicing"/>
    <isoform>
        <id>Q6H3X3-1</id>
        <name evidence="4">1</name>
        <name evidence="10">RAET1G1</name>
        <sequence type="displayed"/>
    </isoform>
    <isoform>
        <id>Q6H3X3-2</id>
        <name evidence="4">2</name>
        <name evidence="10">RAET1G2</name>
        <sequence type="described" ref="VSP_051621 VSP_051622"/>
    </isoform>
    <isoform>
        <id>Q6H3X3-3</id>
        <name>3</name>
        <name evidence="11">RAET1G3</name>
        <sequence type="described" ref="VSP_059264 VSP_051622"/>
    </isoform>
</comment>
<comment type="tissue specificity">
    <text evidence="4 6 8">Isoform 1 is highly expressed in colon and in a number of tumor cell lines and highly restricted in normal tissues. Both isoforms are frequently expressed in cell lines derived from epithelial cancers, and in primary breast cancers.</text>
</comment>
<comment type="PTM">
    <text evidence="9">The functional form is cleaved C-terminally of the GPI-anchor and yields a 28 kDa protein.</text>
</comment>
<comment type="miscellaneous">
    <text evidence="13">UL16-binding proteins (ULBPs) are unusual members of the extended MHC class I superfamily. They do not contain the alpha 3 domain and lack a transmembrane domain.</text>
</comment>
<comment type="similarity">
    <text evidence="3">Belongs to the MHC class I family.</text>
</comment>
<protein>
    <recommendedName>
        <fullName>UL-16 binding protein 5</fullName>
    </recommendedName>
    <alternativeName>
        <fullName evidence="16">Retinoic acid early transcript 1G protein</fullName>
    </alternativeName>
</protein>
<organism>
    <name type="scientific">Homo sapiens</name>
    <name type="common">Human</name>
    <dbReference type="NCBI Taxonomy" id="9606"/>
    <lineage>
        <taxon>Eukaryota</taxon>
        <taxon>Metazoa</taxon>
        <taxon>Chordata</taxon>
        <taxon>Craniata</taxon>
        <taxon>Vertebrata</taxon>
        <taxon>Euteleostomi</taxon>
        <taxon>Mammalia</taxon>
        <taxon>Eutheria</taxon>
        <taxon>Euarchontoglires</taxon>
        <taxon>Primates</taxon>
        <taxon>Haplorrhini</taxon>
        <taxon>Catarrhini</taxon>
        <taxon>Hominidae</taxon>
        <taxon>Homo</taxon>
    </lineage>
</organism>
<accession>Q6H3X3</accession>
<accession>Q6H3X2</accession>